<name>DNLJ_PSEAE</name>
<sequence>MTDTQAAAERIAQLRTELDTHNYRYYVLDEPSIPDAEYDRLFRELQALEAEYPQLLTPDSPTQRVSGTPASAFGEVRHEIPMLSLGNAFEEQDLLDFDRRVREGLADLLPGGDLLGGGAEVEYSCEPKLDGLAVSLLYERGQLVRGATRGDGSTGEDITSNVRTIRNVPLKLHGEGWPEILEVRGEVFMSKAGFEALNAKAVETGGKTFANPRNAAAGSLRQLDSKITASRPLEFCAYGFGQVSGTLPDTQVGILEAFRGWGIPISRELRLVKGAQACRDYYDDIGRRRDALAYEIDGVVFKVNRIAFQRELGFRAREPRWAIAHKFPAREELTELLGVEFQVGRTGAVTPVARLKPVQVAGVTVSNATLHNMDEVARLGLRIGDTVVIRRAGDVIPQVMQVVLERRPADAQAIEVPEHCPVCGSAVERTQLVKRSKGKESISEGAIYRCVGRLSCQAQLKQAIIHFVSRRAMDIDGLGDKIVEQLVDRGLVASPADLYTLTYEQVFELEGFAELSTNNLLTAIADSRKPSLARFIFALGIPDVGEETAKLLARSLGSLERIGKALPEVLTYLPDVGAEVAYEIHNFFADEHNRQVIAQLRDAEHGVQLQEEGEVAAEFAACASLAGFIDKLNIPFIAATGAEKLASRFGSLDGIIRADWLDLRQVERLPERAAKSLRDFFDEPANVQRALAIEAQLREFGMHWQSERKAVEGLPLAGQTWVLTGTLEAMSRDVAKDKLEGLGAKVAGSVSAKTHCVVAGPGAGSKLAKANELGVKVLDEDGLLKLFDEHGVAR</sequence>
<comment type="function">
    <text evidence="1">DNA ligase that catalyzes the formation of phosphodiester linkages between 5'-phosphoryl and 3'-hydroxyl groups in double-stranded DNA using NAD as a coenzyme and as the energy source for the reaction. It is essential for DNA replication and repair of damaged DNA.</text>
</comment>
<comment type="catalytic activity">
    <reaction evidence="1">
        <text>NAD(+) + (deoxyribonucleotide)n-3'-hydroxyl + 5'-phospho-(deoxyribonucleotide)m = (deoxyribonucleotide)n+m + AMP + beta-nicotinamide D-nucleotide.</text>
        <dbReference type="EC" id="6.5.1.2"/>
    </reaction>
</comment>
<comment type="cofactor">
    <cofactor evidence="1">
        <name>Mg(2+)</name>
        <dbReference type="ChEBI" id="CHEBI:18420"/>
    </cofactor>
    <cofactor evidence="1">
        <name>Mn(2+)</name>
        <dbReference type="ChEBI" id="CHEBI:29035"/>
    </cofactor>
</comment>
<comment type="similarity">
    <text evidence="1">Belongs to the NAD-dependent DNA ligase family. LigA subfamily.</text>
</comment>
<keyword id="KW-0227">DNA damage</keyword>
<keyword id="KW-0234">DNA repair</keyword>
<keyword id="KW-0235">DNA replication</keyword>
<keyword id="KW-0436">Ligase</keyword>
<keyword id="KW-0460">Magnesium</keyword>
<keyword id="KW-0464">Manganese</keyword>
<keyword id="KW-0479">Metal-binding</keyword>
<keyword id="KW-0520">NAD</keyword>
<keyword id="KW-1185">Reference proteome</keyword>
<keyword id="KW-0862">Zinc</keyword>
<gene>
    <name evidence="1" type="primary">ligA</name>
    <name type="ordered locus">PA1529</name>
</gene>
<protein>
    <recommendedName>
        <fullName evidence="1">DNA ligase</fullName>
        <ecNumber evidence="1">6.5.1.2</ecNumber>
    </recommendedName>
    <alternativeName>
        <fullName evidence="1">Polydeoxyribonucleotide synthase [NAD(+)]</fullName>
    </alternativeName>
</protein>
<organism>
    <name type="scientific">Pseudomonas aeruginosa (strain ATCC 15692 / DSM 22644 / CIP 104116 / JCM 14847 / LMG 12228 / 1C / PRS 101 / PAO1)</name>
    <dbReference type="NCBI Taxonomy" id="208964"/>
    <lineage>
        <taxon>Bacteria</taxon>
        <taxon>Pseudomonadati</taxon>
        <taxon>Pseudomonadota</taxon>
        <taxon>Gammaproteobacteria</taxon>
        <taxon>Pseudomonadales</taxon>
        <taxon>Pseudomonadaceae</taxon>
        <taxon>Pseudomonas</taxon>
    </lineage>
</organism>
<proteinExistence type="inferred from homology"/>
<dbReference type="EC" id="6.5.1.2" evidence="1"/>
<dbReference type="EMBL" id="AE004091">
    <property type="protein sequence ID" value="AAG04918.1"/>
    <property type="molecule type" value="Genomic_DNA"/>
</dbReference>
<dbReference type="PIR" id="F83454">
    <property type="entry name" value="F83454"/>
</dbReference>
<dbReference type="RefSeq" id="WP_003114675.1">
    <property type="nucleotide sequence ID" value="NZ_QZGE01000032.1"/>
</dbReference>
<dbReference type="SMR" id="Q9I3I4"/>
<dbReference type="FunCoup" id="Q9I3I4">
    <property type="interactions" value="497"/>
</dbReference>
<dbReference type="STRING" id="208964.PA1529"/>
<dbReference type="PaxDb" id="208964-PA1529"/>
<dbReference type="DNASU" id="879269"/>
<dbReference type="KEGG" id="pae:PA1529"/>
<dbReference type="PATRIC" id="fig|208964.12.peg.1582"/>
<dbReference type="PseudoCAP" id="PA1529"/>
<dbReference type="HOGENOM" id="CLU_007764_2_1_6"/>
<dbReference type="InParanoid" id="Q9I3I4"/>
<dbReference type="OrthoDB" id="9759736at2"/>
<dbReference type="PhylomeDB" id="Q9I3I4"/>
<dbReference type="BioCyc" id="PAER208964:G1FZ6-1556-MONOMER"/>
<dbReference type="Proteomes" id="UP000002438">
    <property type="component" value="Chromosome"/>
</dbReference>
<dbReference type="GO" id="GO:0005829">
    <property type="term" value="C:cytosol"/>
    <property type="evidence" value="ECO:0000318"/>
    <property type="project" value="GO_Central"/>
</dbReference>
<dbReference type="GO" id="GO:0003911">
    <property type="term" value="F:DNA ligase (NAD+) activity"/>
    <property type="evidence" value="ECO:0000318"/>
    <property type="project" value="GO_Central"/>
</dbReference>
<dbReference type="GO" id="GO:0046872">
    <property type="term" value="F:metal ion binding"/>
    <property type="evidence" value="ECO:0007669"/>
    <property type="project" value="UniProtKB-KW"/>
</dbReference>
<dbReference type="GO" id="GO:0006281">
    <property type="term" value="P:DNA repair"/>
    <property type="evidence" value="ECO:0007669"/>
    <property type="project" value="UniProtKB-KW"/>
</dbReference>
<dbReference type="GO" id="GO:0006260">
    <property type="term" value="P:DNA replication"/>
    <property type="evidence" value="ECO:0007669"/>
    <property type="project" value="UniProtKB-KW"/>
</dbReference>
<dbReference type="CDD" id="cd17748">
    <property type="entry name" value="BRCT_DNA_ligase_like"/>
    <property type="match status" value="1"/>
</dbReference>
<dbReference type="CDD" id="cd00114">
    <property type="entry name" value="LIGANc"/>
    <property type="match status" value="1"/>
</dbReference>
<dbReference type="FunFam" id="1.10.150.20:FF:000006">
    <property type="entry name" value="DNA ligase"/>
    <property type="match status" value="1"/>
</dbReference>
<dbReference type="FunFam" id="1.10.150.20:FF:000007">
    <property type="entry name" value="DNA ligase"/>
    <property type="match status" value="1"/>
</dbReference>
<dbReference type="FunFam" id="1.10.287.610:FF:000002">
    <property type="entry name" value="DNA ligase"/>
    <property type="match status" value="1"/>
</dbReference>
<dbReference type="FunFam" id="2.40.50.140:FF:000012">
    <property type="entry name" value="DNA ligase"/>
    <property type="match status" value="1"/>
</dbReference>
<dbReference type="FunFam" id="3.30.470.30:FF:000001">
    <property type="entry name" value="DNA ligase"/>
    <property type="match status" value="1"/>
</dbReference>
<dbReference type="FunFam" id="3.40.50.10190:FF:000069">
    <property type="entry name" value="DNA ligase"/>
    <property type="match status" value="1"/>
</dbReference>
<dbReference type="Gene3D" id="6.20.10.30">
    <property type="match status" value="1"/>
</dbReference>
<dbReference type="Gene3D" id="1.10.150.20">
    <property type="entry name" value="5' to 3' exonuclease, C-terminal subdomain"/>
    <property type="match status" value="3"/>
</dbReference>
<dbReference type="Gene3D" id="3.40.50.10190">
    <property type="entry name" value="BRCT domain"/>
    <property type="match status" value="1"/>
</dbReference>
<dbReference type="Gene3D" id="3.30.470.30">
    <property type="entry name" value="DNA ligase/mRNA capping enzyme"/>
    <property type="match status" value="1"/>
</dbReference>
<dbReference type="Gene3D" id="1.10.287.610">
    <property type="entry name" value="Helix hairpin bin"/>
    <property type="match status" value="1"/>
</dbReference>
<dbReference type="Gene3D" id="2.40.50.140">
    <property type="entry name" value="Nucleic acid-binding proteins"/>
    <property type="match status" value="1"/>
</dbReference>
<dbReference type="HAMAP" id="MF_01588">
    <property type="entry name" value="DNA_ligase_A"/>
    <property type="match status" value="1"/>
</dbReference>
<dbReference type="InterPro" id="IPR001357">
    <property type="entry name" value="BRCT_dom"/>
</dbReference>
<dbReference type="InterPro" id="IPR036420">
    <property type="entry name" value="BRCT_dom_sf"/>
</dbReference>
<dbReference type="InterPro" id="IPR041663">
    <property type="entry name" value="DisA/LigA_HHH"/>
</dbReference>
<dbReference type="InterPro" id="IPR001679">
    <property type="entry name" value="DNA_ligase"/>
</dbReference>
<dbReference type="InterPro" id="IPR018239">
    <property type="entry name" value="DNA_ligase_AS"/>
</dbReference>
<dbReference type="InterPro" id="IPR033136">
    <property type="entry name" value="DNA_ligase_CS"/>
</dbReference>
<dbReference type="InterPro" id="IPR013839">
    <property type="entry name" value="DNAligase_adenylation"/>
</dbReference>
<dbReference type="InterPro" id="IPR013840">
    <property type="entry name" value="DNAligase_N"/>
</dbReference>
<dbReference type="InterPro" id="IPR012340">
    <property type="entry name" value="NA-bd_OB-fold"/>
</dbReference>
<dbReference type="InterPro" id="IPR004150">
    <property type="entry name" value="NAD_DNA_ligase_OB"/>
</dbReference>
<dbReference type="InterPro" id="IPR010994">
    <property type="entry name" value="RuvA_2-like"/>
</dbReference>
<dbReference type="InterPro" id="IPR004149">
    <property type="entry name" value="Znf_DNAligase_C4"/>
</dbReference>
<dbReference type="NCBIfam" id="TIGR00575">
    <property type="entry name" value="dnlj"/>
    <property type="match status" value="1"/>
</dbReference>
<dbReference type="NCBIfam" id="NF005932">
    <property type="entry name" value="PRK07956.1"/>
    <property type="match status" value="1"/>
</dbReference>
<dbReference type="PANTHER" id="PTHR23389">
    <property type="entry name" value="CHROMOSOME TRANSMISSION FIDELITY FACTOR 18"/>
    <property type="match status" value="1"/>
</dbReference>
<dbReference type="PANTHER" id="PTHR23389:SF9">
    <property type="entry name" value="DNA LIGASE"/>
    <property type="match status" value="1"/>
</dbReference>
<dbReference type="Pfam" id="PF00533">
    <property type="entry name" value="BRCT"/>
    <property type="match status" value="1"/>
</dbReference>
<dbReference type="Pfam" id="PF01653">
    <property type="entry name" value="DNA_ligase_aden"/>
    <property type="match status" value="1"/>
</dbReference>
<dbReference type="Pfam" id="PF03120">
    <property type="entry name" value="DNA_ligase_OB"/>
    <property type="match status" value="1"/>
</dbReference>
<dbReference type="Pfam" id="PF03119">
    <property type="entry name" value="DNA_ligase_ZBD"/>
    <property type="match status" value="1"/>
</dbReference>
<dbReference type="Pfam" id="PF12826">
    <property type="entry name" value="HHH_2"/>
    <property type="match status" value="2"/>
</dbReference>
<dbReference type="Pfam" id="PF22745">
    <property type="entry name" value="Nlig-Ia"/>
    <property type="match status" value="1"/>
</dbReference>
<dbReference type="PIRSF" id="PIRSF001604">
    <property type="entry name" value="LigA"/>
    <property type="match status" value="1"/>
</dbReference>
<dbReference type="SMART" id="SM00292">
    <property type="entry name" value="BRCT"/>
    <property type="match status" value="1"/>
</dbReference>
<dbReference type="SMART" id="SM00532">
    <property type="entry name" value="LIGANc"/>
    <property type="match status" value="1"/>
</dbReference>
<dbReference type="SUPFAM" id="SSF52113">
    <property type="entry name" value="BRCT domain"/>
    <property type="match status" value="1"/>
</dbReference>
<dbReference type="SUPFAM" id="SSF56091">
    <property type="entry name" value="DNA ligase/mRNA capping enzyme, catalytic domain"/>
    <property type="match status" value="1"/>
</dbReference>
<dbReference type="SUPFAM" id="SSF50249">
    <property type="entry name" value="Nucleic acid-binding proteins"/>
    <property type="match status" value="1"/>
</dbReference>
<dbReference type="SUPFAM" id="SSF47781">
    <property type="entry name" value="RuvA domain 2-like"/>
    <property type="match status" value="2"/>
</dbReference>
<dbReference type="PROSITE" id="PS50172">
    <property type="entry name" value="BRCT"/>
    <property type="match status" value="1"/>
</dbReference>
<dbReference type="PROSITE" id="PS01055">
    <property type="entry name" value="DNA_LIGASE_N1"/>
    <property type="match status" value="1"/>
</dbReference>
<dbReference type="PROSITE" id="PS01056">
    <property type="entry name" value="DNA_LIGASE_N2"/>
    <property type="match status" value="1"/>
</dbReference>
<feature type="chain" id="PRO_0000313373" description="DNA ligase">
    <location>
        <begin position="1"/>
        <end position="794"/>
    </location>
</feature>
<feature type="domain" description="BRCT" evidence="1">
    <location>
        <begin position="711"/>
        <end position="794"/>
    </location>
</feature>
<feature type="active site" description="N6-AMP-lysine intermediate" evidence="1">
    <location>
        <position position="128"/>
    </location>
</feature>
<feature type="binding site" evidence="1">
    <location>
        <begin position="35"/>
        <end position="39"/>
    </location>
    <ligand>
        <name>NAD(+)</name>
        <dbReference type="ChEBI" id="CHEBI:57540"/>
    </ligand>
</feature>
<feature type="binding site" evidence="1">
    <location>
        <begin position="84"/>
        <end position="85"/>
    </location>
    <ligand>
        <name>NAD(+)</name>
        <dbReference type="ChEBI" id="CHEBI:57540"/>
    </ligand>
</feature>
<feature type="binding site" evidence="1">
    <location>
        <position position="126"/>
    </location>
    <ligand>
        <name>NAD(+)</name>
        <dbReference type="ChEBI" id="CHEBI:57540"/>
    </ligand>
</feature>
<feature type="binding site" evidence="1">
    <location>
        <position position="149"/>
    </location>
    <ligand>
        <name>NAD(+)</name>
        <dbReference type="ChEBI" id="CHEBI:57540"/>
    </ligand>
</feature>
<feature type="binding site" evidence="1">
    <location>
        <position position="186"/>
    </location>
    <ligand>
        <name>NAD(+)</name>
        <dbReference type="ChEBI" id="CHEBI:57540"/>
    </ligand>
</feature>
<feature type="binding site" evidence="1">
    <location>
        <position position="302"/>
    </location>
    <ligand>
        <name>NAD(+)</name>
        <dbReference type="ChEBI" id="CHEBI:57540"/>
    </ligand>
</feature>
<feature type="binding site" evidence="1">
    <location>
        <position position="326"/>
    </location>
    <ligand>
        <name>NAD(+)</name>
        <dbReference type="ChEBI" id="CHEBI:57540"/>
    </ligand>
</feature>
<feature type="binding site" evidence="1">
    <location>
        <position position="420"/>
    </location>
    <ligand>
        <name>Zn(2+)</name>
        <dbReference type="ChEBI" id="CHEBI:29105"/>
    </ligand>
</feature>
<feature type="binding site" evidence="1">
    <location>
        <position position="423"/>
    </location>
    <ligand>
        <name>Zn(2+)</name>
        <dbReference type="ChEBI" id="CHEBI:29105"/>
    </ligand>
</feature>
<feature type="binding site" evidence="1">
    <location>
        <position position="450"/>
    </location>
    <ligand>
        <name>Zn(2+)</name>
        <dbReference type="ChEBI" id="CHEBI:29105"/>
    </ligand>
</feature>
<feature type="binding site" evidence="1">
    <location>
        <position position="456"/>
    </location>
    <ligand>
        <name>Zn(2+)</name>
        <dbReference type="ChEBI" id="CHEBI:29105"/>
    </ligand>
</feature>
<evidence type="ECO:0000255" key="1">
    <source>
        <dbReference type="HAMAP-Rule" id="MF_01588"/>
    </source>
</evidence>
<reference key="1">
    <citation type="journal article" date="2000" name="Nature">
        <title>Complete genome sequence of Pseudomonas aeruginosa PAO1, an opportunistic pathogen.</title>
        <authorList>
            <person name="Stover C.K."/>
            <person name="Pham X.-Q.T."/>
            <person name="Erwin A.L."/>
            <person name="Mizoguchi S.D."/>
            <person name="Warrener P."/>
            <person name="Hickey M.J."/>
            <person name="Brinkman F.S.L."/>
            <person name="Hufnagle W.O."/>
            <person name="Kowalik D.J."/>
            <person name="Lagrou M."/>
            <person name="Garber R.L."/>
            <person name="Goltry L."/>
            <person name="Tolentino E."/>
            <person name="Westbrock-Wadman S."/>
            <person name="Yuan Y."/>
            <person name="Brody L.L."/>
            <person name="Coulter S.N."/>
            <person name="Folger K.R."/>
            <person name="Kas A."/>
            <person name="Larbig K."/>
            <person name="Lim R.M."/>
            <person name="Smith K.A."/>
            <person name="Spencer D.H."/>
            <person name="Wong G.K.-S."/>
            <person name="Wu Z."/>
            <person name="Paulsen I.T."/>
            <person name="Reizer J."/>
            <person name="Saier M.H. Jr."/>
            <person name="Hancock R.E.W."/>
            <person name="Lory S."/>
            <person name="Olson M.V."/>
        </authorList>
    </citation>
    <scope>NUCLEOTIDE SEQUENCE [LARGE SCALE GENOMIC DNA]</scope>
    <source>
        <strain>ATCC 15692 / DSM 22644 / CIP 104116 / JCM 14847 / LMG 12228 / 1C / PRS 101 / PAO1</strain>
    </source>
</reference>
<accession>Q9I3I4</accession>